<proteinExistence type="inferred from homology"/>
<keyword id="KW-0378">Hydrolase</keyword>
<keyword id="KW-0460">Magnesium</keyword>
<keyword id="KW-0464">Manganese</keyword>
<keyword id="KW-0479">Metal-binding</keyword>
<keyword id="KW-0546">Nucleotide metabolism</keyword>
<keyword id="KW-0547">Nucleotide-binding</keyword>
<dbReference type="EC" id="3.6.1.73" evidence="1"/>
<dbReference type="EMBL" id="CP001048">
    <property type="protein sequence ID" value="ACC87603.1"/>
    <property type="molecule type" value="Genomic_DNA"/>
</dbReference>
<dbReference type="SMR" id="B2K3K4"/>
<dbReference type="KEGG" id="ypb:YPTS_0619"/>
<dbReference type="PATRIC" id="fig|502801.10.peg.4297"/>
<dbReference type="GO" id="GO:0103023">
    <property type="term" value="F:ITPase activity"/>
    <property type="evidence" value="ECO:0007669"/>
    <property type="project" value="UniProtKB-EC"/>
</dbReference>
<dbReference type="GO" id="GO:0046872">
    <property type="term" value="F:metal ion binding"/>
    <property type="evidence" value="ECO:0007669"/>
    <property type="project" value="UniProtKB-KW"/>
</dbReference>
<dbReference type="GO" id="GO:0000166">
    <property type="term" value="F:nucleotide binding"/>
    <property type="evidence" value="ECO:0007669"/>
    <property type="project" value="UniProtKB-KW"/>
</dbReference>
<dbReference type="GO" id="GO:0017111">
    <property type="term" value="F:ribonucleoside triphosphate phosphatase activity"/>
    <property type="evidence" value="ECO:0000250"/>
    <property type="project" value="UniProtKB"/>
</dbReference>
<dbReference type="GO" id="GO:0009117">
    <property type="term" value="P:nucleotide metabolic process"/>
    <property type="evidence" value="ECO:0007669"/>
    <property type="project" value="UniProtKB-KW"/>
</dbReference>
<dbReference type="GO" id="GO:0006772">
    <property type="term" value="P:thiamine metabolic process"/>
    <property type="evidence" value="ECO:0007669"/>
    <property type="project" value="TreeGrafter"/>
</dbReference>
<dbReference type="FunFam" id="3.90.950.10:FF:000002">
    <property type="entry name" value="Inosine/xanthosine triphosphatase"/>
    <property type="match status" value="1"/>
</dbReference>
<dbReference type="Gene3D" id="3.90.950.10">
    <property type="match status" value="1"/>
</dbReference>
<dbReference type="HAMAP" id="MF_00648">
    <property type="entry name" value="Non_canon_purine_NTPase_YjjX"/>
    <property type="match status" value="1"/>
</dbReference>
<dbReference type="InterPro" id="IPR029001">
    <property type="entry name" value="ITPase-like_fam"/>
</dbReference>
<dbReference type="InterPro" id="IPR002786">
    <property type="entry name" value="Non_canon_purine_NTPase"/>
</dbReference>
<dbReference type="InterPro" id="IPR026533">
    <property type="entry name" value="NTPase/PRRC1"/>
</dbReference>
<dbReference type="InterPro" id="IPR050299">
    <property type="entry name" value="YjjX_NTPase"/>
</dbReference>
<dbReference type="NCBIfam" id="TIGR00258">
    <property type="entry name" value="inosine/xanthosine triphosphatase"/>
    <property type="match status" value="1"/>
</dbReference>
<dbReference type="NCBIfam" id="NF003459">
    <property type="entry name" value="PRK05074.1"/>
    <property type="match status" value="1"/>
</dbReference>
<dbReference type="PANTHER" id="PTHR34699">
    <property type="match status" value="1"/>
</dbReference>
<dbReference type="PANTHER" id="PTHR34699:SF2">
    <property type="entry name" value="NON-CANONICAL PURINE NTP PHOSPHATASE_PRRC1 DOMAIN-CONTAINING PROTEIN"/>
    <property type="match status" value="1"/>
</dbReference>
<dbReference type="Pfam" id="PF01931">
    <property type="entry name" value="NTPase_I-T"/>
    <property type="match status" value="1"/>
</dbReference>
<dbReference type="SUPFAM" id="SSF52972">
    <property type="entry name" value="ITPase-like"/>
    <property type="match status" value="1"/>
</dbReference>
<feature type="chain" id="PRO_1000130952" description="Inosine/xanthosine triphosphatase">
    <location>
        <begin position="1"/>
        <end position="180"/>
    </location>
</feature>
<feature type="binding site" evidence="1">
    <location>
        <begin position="8"/>
        <end position="13"/>
    </location>
    <ligand>
        <name>substrate</name>
    </ligand>
</feature>
<feature type="binding site" evidence="1">
    <location>
        <position position="38"/>
    </location>
    <ligand>
        <name>Mg(2+)</name>
        <dbReference type="ChEBI" id="CHEBI:18420"/>
    </ligand>
</feature>
<feature type="binding site" evidence="1">
    <location>
        <begin position="68"/>
        <end position="69"/>
    </location>
    <ligand>
        <name>substrate</name>
    </ligand>
</feature>
<feature type="binding site" evidence="1">
    <location>
        <position position="68"/>
    </location>
    <ligand>
        <name>Mg(2+)</name>
        <dbReference type="ChEBI" id="CHEBI:18420"/>
    </ligand>
</feature>
<gene>
    <name type="ordered locus">YPTS_0619</name>
</gene>
<comment type="function">
    <text evidence="1">Phosphatase that hydrolyzes non-canonical purine nucleotides such as XTP and ITP to their respective diphosphate derivatives. Probably excludes non-canonical purines from DNA/RNA precursor pool, thus preventing their incorporation into DNA/RNA and avoiding chromosomal lesions.</text>
</comment>
<comment type="catalytic activity">
    <reaction evidence="1">
        <text>XTP + H2O = XDP + phosphate + H(+)</text>
        <dbReference type="Rhea" id="RHEA:28406"/>
        <dbReference type="ChEBI" id="CHEBI:15377"/>
        <dbReference type="ChEBI" id="CHEBI:15378"/>
        <dbReference type="ChEBI" id="CHEBI:43474"/>
        <dbReference type="ChEBI" id="CHEBI:59884"/>
        <dbReference type="ChEBI" id="CHEBI:61314"/>
        <dbReference type="EC" id="3.6.1.73"/>
    </reaction>
</comment>
<comment type="catalytic activity">
    <reaction evidence="1">
        <text>ITP + H2O = IDP + phosphate + H(+)</text>
        <dbReference type="Rhea" id="RHEA:28330"/>
        <dbReference type="ChEBI" id="CHEBI:15377"/>
        <dbReference type="ChEBI" id="CHEBI:15378"/>
        <dbReference type="ChEBI" id="CHEBI:43474"/>
        <dbReference type="ChEBI" id="CHEBI:58280"/>
        <dbReference type="ChEBI" id="CHEBI:61402"/>
        <dbReference type="EC" id="3.6.1.73"/>
    </reaction>
</comment>
<comment type="cofactor">
    <cofactor evidence="1">
        <name>Mg(2+)</name>
        <dbReference type="ChEBI" id="CHEBI:18420"/>
    </cofactor>
    <cofactor evidence="1">
        <name>Mn(2+)</name>
        <dbReference type="ChEBI" id="CHEBI:29035"/>
    </cofactor>
    <text evidence="1">Binds 1 divalent metal cation per subunit; can use either Mg(2+) or Mn(2+).</text>
</comment>
<comment type="subunit">
    <text evidence="1">Homodimer.</text>
</comment>
<comment type="similarity">
    <text evidence="1">Belongs to the YjjX NTPase family.</text>
</comment>
<name>NCPP_YERPB</name>
<sequence length="180" mass="19709">MYHVIAATTNPAKINAITLAFDDVYGPGQYRIEGVNVDSGVPLQPIGSTETRIGARQRVKNARQVRPEADFWVGIEAGIEDNMTFAWMVIEHLQARGESRSASLMLPDIILQGIRQGRELGDEMAVLSGISNVKQQGGAIGIFTQGKLTRTSVYHQALLLALVPFHNEIYQRPSPSKPAI</sequence>
<organism>
    <name type="scientific">Yersinia pseudotuberculosis serotype IB (strain PB1/+)</name>
    <dbReference type="NCBI Taxonomy" id="502801"/>
    <lineage>
        <taxon>Bacteria</taxon>
        <taxon>Pseudomonadati</taxon>
        <taxon>Pseudomonadota</taxon>
        <taxon>Gammaproteobacteria</taxon>
        <taxon>Enterobacterales</taxon>
        <taxon>Yersiniaceae</taxon>
        <taxon>Yersinia</taxon>
    </lineage>
</organism>
<protein>
    <recommendedName>
        <fullName evidence="1">Inosine/xanthosine triphosphatase</fullName>
        <shortName evidence="1">ITPase/XTPase</shortName>
        <ecNumber evidence="1">3.6.1.73</ecNumber>
    </recommendedName>
    <alternativeName>
        <fullName evidence="1">Non-canonical purine NTP phosphatase</fullName>
    </alternativeName>
    <alternativeName>
        <fullName evidence="1">Non-standard purine NTP phosphatase</fullName>
    </alternativeName>
    <alternativeName>
        <fullName evidence="1">Nucleoside-triphosphate phosphatase</fullName>
        <shortName evidence="1">NTPase</shortName>
    </alternativeName>
</protein>
<accession>B2K3K4</accession>
<reference key="1">
    <citation type="submission" date="2008-04" db="EMBL/GenBank/DDBJ databases">
        <title>Complete sequence of Yersinia pseudotuberculosis PB1/+.</title>
        <authorList>
            <person name="Copeland A."/>
            <person name="Lucas S."/>
            <person name="Lapidus A."/>
            <person name="Glavina del Rio T."/>
            <person name="Dalin E."/>
            <person name="Tice H."/>
            <person name="Bruce D."/>
            <person name="Goodwin L."/>
            <person name="Pitluck S."/>
            <person name="Munk A.C."/>
            <person name="Brettin T."/>
            <person name="Detter J.C."/>
            <person name="Han C."/>
            <person name="Tapia R."/>
            <person name="Schmutz J."/>
            <person name="Larimer F."/>
            <person name="Land M."/>
            <person name="Hauser L."/>
            <person name="Challacombe J.F."/>
            <person name="Green L."/>
            <person name="Lindler L.E."/>
            <person name="Nikolich M.P."/>
            <person name="Richardson P."/>
        </authorList>
    </citation>
    <scope>NUCLEOTIDE SEQUENCE [LARGE SCALE GENOMIC DNA]</scope>
    <source>
        <strain>PB1/+</strain>
    </source>
</reference>
<evidence type="ECO:0000255" key="1">
    <source>
        <dbReference type="HAMAP-Rule" id="MF_00648"/>
    </source>
</evidence>